<organism>
    <name type="scientific">Micrococcus luteus</name>
    <name type="common">Micrococcus lysodeikticus</name>
    <dbReference type="NCBI Taxonomy" id="1270"/>
    <lineage>
        <taxon>Bacteria</taxon>
        <taxon>Bacillati</taxon>
        <taxon>Actinomycetota</taxon>
        <taxon>Actinomycetes</taxon>
        <taxon>Micrococcales</taxon>
        <taxon>Micrococcaceae</taxon>
        <taxon>Micrococcus</taxon>
    </lineage>
</organism>
<dbReference type="EMBL" id="X15867">
    <property type="protein sequence ID" value="CAA33877.1"/>
    <property type="molecule type" value="Genomic_DNA"/>
</dbReference>
<dbReference type="PIR" id="S04781">
    <property type="entry name" value="S04781"/>
</dbReference>
<dbReference type="SMR" id="P13567"/>
<dbReference type="STRING" id="1232675.GCA_000309825_01852"/>
<dbReference type="GO" id="GO:0005737">
    <property type="term" value="C:cytoplasm"/>
    <property type="evidence" value="ECO:0007669"/>
    <property type="project" value="UniProtKB-SubCell"/>
</dbReference>
<dbReference type="GO" id="GO:0009380">
    <property type="term" value="C:excinuclease repair complex"/>
    <property type="evidence" value="ECO:0007669"/>
    <property type="project" value="InterPro"/>
</dbReference>
<dbReference type="GO" id="GO:0005524">
    <property type="term" value="F:ATP binding"/>
    <property type="evidence" value="ECO:0007669"/>
    <property type="project" value="UniProtKB-UniRule"/>
</dbReference>
<dbReference type="GO" id="GO:0016887">
    <property type="term" value="F:ATP hydrolysis activity"/>
    <property type="evidence" value="ECO:0007669"/>
    <property type="project" value="InterPro"/>
</dbReference>
<dbReference type="GO" id="GO:0003677">
    <property type="term" value="F:DNA binding"/>
    <property type="evidence" value="ECO:0007669"/>
    <property type="project" value="UniProtKB-UniRule"/>
</dbReference>
<dbReference type="GO" id="GO:0009381">
    <property type="term" value="F:excinuclease ABC activity"/>
    <property type="evidence" value="ECO:0007669"/>
    <property type="project" value="UniProtKB-UniRule"/>
</dbReference>
<dbReference type="GO" id="GO:0008270">
    <property type="term" value="F:zinc ion binding"/>
    <property type="evidence" value="ECO:0007669"/>
    <property type="project" value="UniProtKB-UniRule"/>
</dbReference>
<dbReference type="GO" id="GO:0006289">
    <property type="term" value="P:nucleotide-excision repair"/>
    <property type="evidence" value="ECO:0007669"/>
    <property type="project" value="UniProtKB-UniRule"/>
</dbReference>
<dbReference type="GO" id="GO:0009432">
    <property type="term" value="P:SOS response"/>
    <property type="evidence" value="ECO:0007669"/>
    <property type="project" value="UniProtKB-UniRule"/>
</dbReference>
<dbReference type="CDD" id="cd03271">
    <property type="entry name" value="ABC_UvrA_II"/>
    <property type="match status" value="1"/>
</dbReference>
<dbReference type="FunFam" id="1.20.1580.10:FF:000001">
    <property type="entry name" value="UvrABC system protein A"/>
    <property type="match status" value="1"/>
</dbReference>
<dbReference type="FunFam" id="1.20.1580.10:FF:000002">
    <property type="entry name" value="UvrABC system protein A"/>
    <property type="match status" value="1"/>
</dbReference>
<dbReference type="Gene3D" id="1.10.8.280">
    <property type="entry name" value="ABC transporter ATPase domain-like"/>
    <property type="match status" value="1"/>
</dbReference>
<dbReference type="Gene3D" id="1.20.1580.10">
    <property type="entry name" value="ABC transporter ATPase like domain"/>
    <property type="match status" value="2"/>
</dbReference>
<dbReference type="Gene3D" id="3.30.1490.20">
    <property type="entry name" value="ATP-grasp fold, A domain"/>
    <property type="match status" value="1"/>
</dbReference>
<dbReference type="Gene3D" id="3.40.50.300">
    <property type="entry name" value="P-loop containing nucleotide triphosphate hydrolases"/>
    <property type="match status" value="2"/>
</dbReference>
<dbReference type="HAMAP" id="MF_00205">
    <property type="entry name" value="UvrA"/>
    <property type="match status" value="1"/>
</dbReference>
<dbReference type="InterPro" id="IPR003593">
    <property type="entry name" value="AAA+_ATPase"/>
</dbReference>
<dbReference type="InterPro" id="IPR003439">
    <property type="entry name" value="ABC_transporter-like_ATP-bd"/>
</dbReference>
<dbReference type="InterPro" id="IPR017871">
    <property type="entry name" value="ABC_transporter-like_CS"/>
</dbReference>
<dbReference type="InterPro" id="IPR013815">
    <property type="entry name" value="ATP_grasp_subdomain_1"/>
</dbReference>
<dbReference type="InterPro" id="IPR027417">
    <property type="entry name" value="P-loop_NTPase"/>
</dbReference>
<dbReference type="InterPro" id="IPR004602">
    <property type="entry name" value="UvrA"/>
</dbReference>
<dbReference type="InterPro" id="IPR041552">
    <property type="entry name" value="UvrA_DNA-bd"/>
</dbReference>
<dbReference type="InterPro" id="IPR041102">
    <property type="entry name" value="UvrA_inter"/>
</dbReference>
<dbReference type="NCBIfam" id="NF001503">
    <property type="entry name" value="PRK00349.1"/>
    <property type="match status" value="1"/>
</dbReference>
<dbReference type="NCBIfam" id="TIGR00630">
    <property type="entry name" value="uvra"/>
    <property type="match status" value="1"/>
</dbReference>
<dbReference type="PANTHER" id="PTHR43152">
    <property type="entry name" value="UVRABC SYSTEM PROTEIN A"/>
    <property type="match status" value="1"/>
</dbReference>
<dbReference type="PANTHER" id="PTHR43152:SF3">
    <property type="entry name" value="UVRABC SYSTEM PROTEIN A"/>
    <property type="match status" value="1"/>
</dbReference>
<dbReference type="Pfam" id="PF17755">
    <property type="entry name" value="UvrA_DNA-bind"/>
    <property type="match status" value="1"/>
</dbReference>
<dbReference type="Pfam" id="PF17760">
    <property type="entry name" value="UvrA_inter"/>
    <property type="match status" value="1"/>
</dbReference>
<dbReference type="SMART" id="SM00382">
    <property type="entry name" value="AAA"/>
    <property type="match status" value="1"/>
</dbReference>
<dbReference type="SUPFAM" id="SSF52540">
    <property type="entry name" value="P-loop containing nucleoside triphosphate hydrolases"/>
    <property type="match status" value="2"/>
</dbReference>
<dbReference type="PROSITE" id="PS00211">
    <property type="entry name" value="ABC_TRANSPORTER_1"/>
    <property type="match status" value="2"/>
</dbReference>
<dbReference type="PROSITE" id="PS50893">
    <property type="entry name" value="ABC_TRANSPORTER_2"/>
    <property type="match status" value="1"/>
</dbReference>
<name>UVRA_MICLU</name>
<gene>
    <name evidence="1" type="primary">uvrA</name>
</gene>
<sequence>MPKNSSTTVSSAVEAHAGGLASGPGGARSGERDRIVVQGAREHNLKDVDVSFPRDAMVVFTGLSGSGKSSLAFDTIFAEGQRRYVESLSSYARMFLGRVDKPDVDFIEGLSPAVSIDQKSTNRNPRSTVGTITEIYDYMRLLWARVGVPHCPQCGEPVSRQTPQQIVDQLEELPERTRFQVLAPVVRGRKGEFVDLFRDLSTQGFAVVDGETVQLSDPPVLKKQVKHTIAVVVDRLAMKEGIRQRLTDSVETALKLADGLVVAEFVDVEPVAEKGKKNTAEFGGRDAEGNPRYRSFSEKLSCPNGHEQTVDEIEPRSFSFNNPFGACPECTGIGSRLQVDPDLVVANDELSLREGAVVPWSLGKSTSDYWLRVLGGLGKEMGFSLDTPWKDLTEAERDAVLHGKDFKVEVTFRNRFGRERRYTTGFEGVIPYVMRKHGETESDGARERYESFMREIPCPACHGARLNPTVLNVLVGGLSIADATRLPMREAMEFFSGLRLTDRERQIADQVLKEILARLAFLLDVGLEYLNLERPAGTLSGGEAQRIRLATQIGSGLVGVLYVLDEPSIGLHQRDNRRLIETLLRLRDLGNTLIVVEHDEDTIAEADWIVDIGPRAGEYGGEVVHSGSLADLKANTRSVTGDYLSGRRSIAVPERRRVPEKGRVLTVRGAQENNLKDVSVQVPLGVLTAVTGVSGSGKSTLINEILYKVLANRLNGAKLVPGRHRSVEGLEHLDKVVHVDQSPIGRTPRSNPATYTGVFDAIRKLFAETPEAKVRGYQQGRFSFNIKGGRCEACAGDGTLKIEMNFLPDVYVPCEVCHGARYNRETLEVTYKGKNIAEVLDMPIEEAADFFSAYTRISRYLDTLVDVGLGYVRLGQPATTLSGGEAQRVKLAAELQKRSNGRTIYVLDEPTTGLHFDDIRKLLHVLQSLVDKGNTVLTIEHNLDVIKSADHVIDLGPEGGSGGGTIVATGTPEEVARAAESHTGRFLAELLA</sequence>
<protein>
    <recommendedName>
        <fullName evidence="1">UvrABC system protein A</fullName>
        <shortName evidence="1">UvrA protein</shortName>
    </recommendedName>
    <alternativeName>
        <fullName evidence="1">Excinuclease ABC subunit A</fullName>
    </alternativeName>
</protein>
<evidence type="ECO:0000255" key="1">
    <source>
        <dbReference type="HAMAP-Rule" id="MF_00205"/>
    </source>
</evidence>
<evidence type="ECO:0000256" key="2">
    <source>
        <dbReference type="SAM" id="MobiDB-lite"/>
    </source>
</evidence>
<keyword id="KW-0067">ATP-binding</keyword>
<keyword id="KW-0963">Cytoplasm</keyword>
<keyword id="KW-0227">DNA damage</keyword>
<keyword id="KW-0228">DNA excision</keyword>
<keyword id="KW-0234">DNA repair</keyword>
<keyword id="KW-0238">DNA-binding</keyword>
<keyword id="KW-0267">Excision nuclease</keyword>
<keyword id="KW-0479">Metal-binding</keyword>
<keyword id="KW-0547">Nucleotide-binding</keyword>
<keyword id="KW-0677">Repeat</keyword>
<keyword id="KW-0742">SOS response</keyword>
<keyword id="KW-0862">Zinc</keyword>
<keyword id="KW-0863">Zinc-finger</keyword>
<proteinExistence type="inferred from homology"/>
<accession>P13567</accession>
<feature type="chain" id="PRO_0000093063" description="UvrABC system protein A">
    <location>
        <begin position="1"/>
        <end position="992"/>
    </location>
</feature>
<feature type="domain" description="ABC transporter 1" evidence="1">
    <location>
        <begin position="360"/>
        <end position="639"/>
    </location>
</feature>
<feature type="domain" description="ABC transporter 2" evidence="1">
    <location>
        <begin position="659"/>
        <end position="988"/>
    </location>
</feature>
<feature type="zinc finger region" description="C4-type; atypical" evidence="1">
    <location>
        <begin position="302"/>
        <end position="330"/>
    </location>
</feature>
<feature type="zinc finger region" description="C4-type" evidence="1">
    <location>
        <begin position="791"/>
        <end position="817"/>
    </location>
</feature>
<feature type="region of interest" description="Disordered" evidence="2">
    <location>
        <begin position="1"/>
        <end position="30"/>
    </location>
</feature>
<feature type="compositionally biased region" description="Polar residues" evidence="2">
    <location>
        <begin position="1"/>
        <end position="11"/>
    </location>
</feature>
<feature type="binding site">
    <location>
        <begin position="62"/>
        <end position="69"/>
    </location>
    <ligand>
        <name>ATP</name>
        <dbReference type="ChEBI" id="CHEBI:30616"/>
    </ligand>
</feature>
<feature type="binding site">
    <location>
        <begin position="692"/>
        <end position="699"/>
    </location>
    <ligand>
        <name>ATP</name>
        <dbReference type="ChEBI" id="CHEBI:30616"/>
    </ligand>
</feature>
<comment type="function">
    <text evidence="1">The UvrABC repair system catalyzes the recognition and processing of DNA lesions. UvrA is an ATPase and a DNA-binding protein. A damage recognition complex composed of 2 UvrA and 2 UvrB subunits scans DNA for abnormalities. When the presence of a lesion has been verified by UvrB, the UvrA molecules dissociate.</text>
</comment>
<comment type="subunit">
    <text evidence="1">Forms a heterotetramer with UvrB during the search for lesions.</text>
</comment>
<comment type="subcellular location">
    <subcellularLocation>
        <location evidence="1">Cytoplasm</location>
    </subcellularLocation>
</comment>
<comment type="similarity">
    <text evidence="1">Belongs to the ABC transporter superfamily. UvrA family.</text>
</comment>
<reference key="1">
    <citation type="journal article" date="1989" name="Mol. Gen. Genet.">
        <title>Micrococcus luteus homolog of the Escherichia coli uvrA gene: identification of a mutation in the UV-sensitive mutant DB7.</title>
        <authorList>
            <person name="Shiota S."/>
            <person name="Nakayama H."/>
        </authorList>
    </citation>
    <scope>NUCLEOTIDE SEQUENCE [GENOMIC DNA]</scope>
</reference>